<feature type="chain" id="PRO_1000145708" description="Cation-efflux pump FieF">
    <location>
        <begin position="1"/>
        <end position="300"/>
    </location>
</feature>
<feature type="transmembrane region" description="Helical" evidence="1">
    <location>
        <begin position="12"/>
        <end position="32"/>
    </location>
</feature>
<feature type="transmembrane region" description="Helical" evidence="1">
    <location>
        <begin position="40"/>
        <end position="60"/>
    </location>
</feature>
<feature type="transmembrane region" description="Helical" evidence="1">
    <location>
        <begin position="82"/>
        <end position="102"/>
    </location>
</feature>
<feature type="transmembrane region" description="Helical" evidence="1">
    <location>
        <begin position="114"/>
        <end position="134"/>
    </location>
</feature>
<feature type="transmembrane region" description="Helical" evidence="1">
    <location>
        <begin position="155"/>
        <end position="175"/>
    </location>
</feature>
<feature type="transmembrane region" description="Helical" evidence="1">
    <location>
        <begin position="178"/>
        <end position="198"/>
    </location>
</feature>
<feature type="binding site" evidence="1">
    <location>
        <position position="45"/>
    </location>
    <ligand>
        <name>Zn(2+)</name>
        <dbReference type="ChEBI" id="CHEBI:29105"/>
    </ligand>
</feature>
<feature type="binding site" evidence="1">
    <location>
        <position position="49"/>
    </location>
    <ligand>
        <name>Zn(2+)</name>
        <dbReference type="ChEBI" id="CHEBI:29105"/>
    </ligand>
</feature>
<feature type="binding site" evidence="1">
    <location>
        <position position="153"/>
    </location>
    <ligand>
        <name>Zn(2+)</name>
        <dbReference type="ChEBI" id="CHEBI:29105"/>
    </ligand>
</feature>
<feature type="binding site" evidence="1">
    <location>
        <position position="157"/>
    </location>
    <ligand>
        <name>Zn(2+)</name>
        <dbReference type="ChEBI" id="CHEBI:29105"/>
    </ligand>
</feature>
<evidence type="ECO:0000255" key="1">
    <source>
        <dbReference type="HAMAP-Rule" id="MF_01425"/>
    </source>
</evidence>
<sequence length="300" mass="33396">MDPQYARWVKAAALSATALASILLIIKIFAWWHTGSVSLLAALVDSLVDLAASLTNLFVVRYSLQPADEEHTFGHGKAESLAALAQSMFISGSALFLFLTGFRHLASPEPLQDPSIGIGVTLVALFSTLILVTFQRWVVRKTHSQAIRADMLHYQSDVLMNGAILIALALSWYGFRRADALFALGIGVYILYSALRMGYEAVQSLLDRALPDDERQQIIDIVTSWPGVIGAHDLRTRRSGQTRFIQLHLEMEDMMPLMEAHVLAEQVEHALLYRFPGADVLIHQDPCSVVPKERHAHWEL</sequence>
<organism>
    <name type="scientific">Yersinia pseudotuberculosis serotype IB (strain PB1/+)</name>
    <dbReference type="NCBI Taxonomy" id="502801"/>
    <lineage>
        <taxon>Bacteria</taxon>
        <taxon>Pseudomonadati</taxon>
        <taxon>Pseudomonadota</taxon>
        <taxon>Gammaproteobacteria</taxon>
        <taxon>Enterobacterales</taxon>
        <taxon>Yersiniaceae</taxon>
        <taxon>Yersinia</taxon>
    </lineage>
</organism>
<dbReference type="EMBL" id="CP001048">
    <property type="protein sequence ID" value="ACC87075.1"/>
    <property type="molecule type" value="Genomic_DNA"/>
</dbReference>
<dbReference type="RefSeq" id="WP_002208967.1">
    <property type="nucleotide sequence ID" value="NZ_CP009780.1"/>
</dbReference>
<dbReference type="SMR" id="B2JZA2"/>
<dbReference type="GeneID" id="57974515"/>
<dbReference type="KEGG" id="ypb:YPTS_0076"/>
<dbReference type="PATRIC" id="fig|502801.10.peg.3752"/>
<dbReference type="GO" id="GO:0005886">
    <property type="term" value="C:plasma membrane"/>
    <property type="evidence" value="ECO:0007669"/>
    <property type="project" value="UniProtKB-SubCell"/>
</dbReference>
<dbReference type="GO" id="GO:0015086">
    <property type="term" value="F:cadmium ion transmembrane transporter activity"/>
    <property type="evidence" value="ECO:0007669"/>
    <property type="project" value="UniProtKB-UniRule"/>
</dbReference>
<dbReference type="GO" id="GO:0015093">
    <property type="term" value="F:ferrous iron transmembrane transporter activity"/>
    <property type="evidence" value="ECO:0007669"/>
    <property type="project" value="TreeGrafter"/>
</dbReference>
<dbReference type="GO" id="GO:0046872">
    <property type="term" value="F:metal ion binding"/>
    <property type="evidence" value="ECO:0007669"/>
    <property type="project" value="UniProtKB-KW"/>
</dbReference>
<dbReference type="GO" id="GO:0015341">
    <property type="term" value="F:zinc efflux antiporter activity"/>
    <property type="evidence" value="ECO:0007669"/>
    <property type="project" value="TreeGrafter"/>
</dbReference>
<dbReference type="GO" id="GO:0006882">
    <property type="term" value="P:intracellular zinc ion homeostasis"/>
    <property type="evidence" value="ECO:0007669"/>
    <property type="project" value="TreeGrafter"/>
</dbReference>
<dbReference type="FunFam" id="1.20.1510.10:FF:000001">
    <property type="entry name" value="Ferrous-iron efflux pump FieF"/>
    <property type="match status" value="1"/>
</dbReference>
<dbReference type="FunFam" id="3.30.70.1350:FF:000002">
    <property type="entry name" value="Ferrous-iron efflux pump FieF"/>
    <property type="match status" value="1"/>
</dbReference>
<dbReference type="Gene3D" id="1.20.1510.10">
    <property type="entry name" value="Cation efflux protein transmembrane domain"/>
    <property type="match status" value="1"/>
</dbReference>
<dbReference type="Gene3D" id="3.30.70.1350">
    <property type="entry name" value="Cation efflux protein, cytoplasmic domain"/>
    <property type="match status" value="1"/>
</dbReference>
<dbReference type="HAMAP" id="MF_01425">
    <property type="entry name" value="Cation_efflux_FieF"/>
    <property type="match status" value="1"/>
</dbReference>
<dbReference type="InterPro" id="IPR002524">
    <property type="entry name" value="Cation_efflux"/>
</dbReference>
<dbReference type="InterPro" id="IPR027470">
    <property type="entry name" value="Cation_efflux_CTD"/>
</dbReference>
<dbReference type="InterPro" id="IPR036837">
    <property type="entry name" value="Cation_efflux_CTD_sf"/>
</dbReference>
<dbReference type="InterPro" id="IPR023783">
    <property type="entry name" value="Cation_efflux_FieF"/>
</dbReference>
<dbReference type="InterPro" id="IPR027469">
    <property type="entry name" value="Cation_efflux_TMD_sf"/>
</dbReference>
<dbReference type="InterPro" id="IPR050291">
    <property type="entry name" value="CDF_Transporter"/>
</dbReference>
<dbReference type="NCBIfam" id="TIGR01297">
    <property type="entry name" value="CDF"/>
    <property type="match status" value="1"/>
</dbReference>
<dbReference type="NCBIfam" id="NF007064">
    <property type="entry name" value="PRK09509.1"/>
    <property type="match status" value="1"/>
</dbReference>
<dbReference type="PANTHER" id="PTHR43840:SF41">
    <property type="entry name" value="CATION-EFFLUX PUMP FIEF"/>
    <property type="match status" value="1"/>
</dbReference>
<dbReference type="PANTHER" id="PTHR43840">
    <property type="entry name" value="MITOCHONDRIAL METAL TRANSPORTER 1-RELATED"/>
    <property type="match status" value="1"/>
</dbReference>
<dbReference type="Pfam" id="PF01545">
    <property type="entry name" value="Cation_efflux"/>
    <property type="match status" value="1"/>
</dbReference>
<dbReference type="Pfam" id="PF16916">
    <property type="entry name" value="ZT_dimer"/>
    <property type="match status" value="1"/>
</dbReference>
<dbReference type="SUPFAM" id="SSF160240">
    <property type="entry name" value="Cation efflux protein cytoplasmic domain-like"/>
    <property type="match status" value="1"/>
</dbReference>
<dbReference type="SUPFAM" id="SSF161111">
    <property type="entry name" value="Cation efflux protein transmembrane domain-like"/>
    <property type="match status" value="1"/>
</dbReference>
<reference key="1">
    <citation type="submission" date="2008-04" db="EMBL/GenBank/DDBJ databases">
        <title>Complete sequence of Yersinia pseudotuberculosis PB1/+.</title>
        <authorList>
            <person name="Copeland A."/>
            <person name="Lucas S."/>
            <person name="Lapidus A."/>
            <person name="Glavina del Rio T."/>
            <person name="Dalin E."/>
            <person name="Tice H."/>
            <person name="Bruce D."/>
            <person name="Goodwin L."/>
            <person name="Pitluck S."/>
            <person name="Munk A.C."/>
            <person name="Brettin T."/>
            <person name="Detter J.C."/>
            <person name="Han C."/>
            <person name="Tapia R."/>
            <person name="Schmutz J."/>
            <person name="Larimer F."/>
            <person name="Land M."/>
            <person name="Hauser L."/>
            <person name="Challacombe J.F."/>
            <person name="Green L."/>
            <person name="Lindler L.E."/>
            <person name="Nikolich M.P."/>
            <person name="Richardson P."/>
        </authorList>
    </citation>
    <scope>NUCLEOTIDE SEQUENCE [LARGE SCALE GENOMIC DNA]</scope>
    <source>
        <strain>PB1/+</strain>
    </source>
</reference>
<accession>B2JZA2</accession>
<comment type="function">
    <text evidence="1">Divalent metal cation transporter which exports Zn(2+), Cd(2+) and possibly Fe(2+). May be involved in zinc and iron detoxification by efflux.</text>
</comment>
<comment type="catalytic activity">
    <reaction evidence="1">
        <text>Zn(2+)(in) + H(+)(out) = Zn(2+)(out) + H(+)(in)</text>
        <dbReference type="Rhea" id="RHEA:28839"/>
        <dbReference type="ChEBI" id="CHEBI:15378"/>
        <dbReference type="ChEBI" id="CHEBI:29105"/>
    </reaction>
</comment>
<comment type="catalytic activity">
    <reaction evidence="1">
        <text>Cd(2+)(in) + H(+)(out) = Cd(2+)(out) + H(+)(in)</text>
        <dbReference type="Rhea" id="RHEA:28739"/>
        <dbReference type="ChEBI" id="CHEBI:15378"/>
        <dbReference type="ChEBI" id="CHEBI:48775"/>
    </reaction>
</comment>
<comment type="catalytic activity">
    <reaction evidence="1">
        <text>Fe(2+)(in) + H(+)(out) = Fe(2+)(out) + H(+)(in)</text>
        <dbReference type="Rhea" id="RHEA:29439"/>
        <dbReference type="ChEBI" id="CHEBI:15378"/>
        <dbReference type="ChEBI" id="CHEBI:29033"/>
    </reaction>
</comment>
<comment type="subunit">
    <text evidence="1">Homodimer.</text>
</comment>
<comment type="subcellular location">
    <subcellularLocation>
        <location evidence="1">Cell inner membrane</location>
        <topology evidence="1">Multi-pass membrane protein</topology>
    </subcellularLocation>
</comment>
<comment type="similarity">
    <text evidence="1">Belongs to the cation diffusion facilitator (CDF) transporter (TC 2.A.4) family. FieF subfamily.</text>
</comment>
<name>FIEF_YERPB</name>
<keyword id="KW-0997">Cell inner membrane</keyword>
<keyword id="KW-1003">Cell membrane</keyword>
<keyword id="KW-0406">Ion transport</keyword>
<keyword id="KW-0408">Iron</keyword>
<keyword id="KW-0410">Iron transport</keyword>
<keyword id="KW-0472">Membrane</keyword>
<keyword id="KW-0479">Metal-binding</keyword>
<keyword id="KW-0812">Transmembrane</keyword>
<keyword id="KW-1133">Transmembrane helix</keyword>
<keyword id="KW-0813">Transport</keyword>
<keyword id="KW-0862">Zinc</keyword>
<keyword id="KW-0864">Zinc transport</keyword>
<gene>
    <name evidence="1" type="primary">fieF</name>
    <name type="ordered locus">YPTS_0076</name>
</gene>
<protein>
    <recommendedName>
        <fullName evidence="1">Cation-efflux pump FieF</fullName>
    </recommendedName>
</protein>
<proteinExistence type="inferred from homology"/>